<name>MDH_NEOSM</name>
<comment type="function">
    <text evidence="1">Catalyzes the reversible oxidation of malate to oxaloacetate.</text>
</comment>
<comment type="catalytic activity">
    <reaction evidence="1">
        <text>(S)-malate + NAD(+) = oxaloacetate + NADH + H(+)</text>
        <dbReference type="Rhea" id="RHEA:21432"/>
        <dbReference type="ChEBI" id="CHEBI:15378"/>
        <dbReference type="ChEBI" id="CHEBI:15589"/>
        <dbReference type="ChEBI" id="CHEBI:16452"/>
        <dbReference type="ChEBI" id="CHEBI:57540"/>
        <dbReference type="ChEBI" id="CHEBI:57945"/>
        <dbReference type="EC" id="1.1.1.37"/>
    </reaction>
</comment>
<comment type="similarity">
    <text evidence="1">Belongs to the LDH/MDH superfamily. MDH type 3 family.</text>
</comment>
<reference key="1">
    <citation type="journal article" date="2006" name="PLoS Genet.">
        <title>Comparative genomics of emerging human ehrlichiosis agents.</title>
        <authorList>
            <person name="Dunning Hotopp J.C."/>
            <person name="Lin M."/>
            <person name="Madupu R."/>
            <person name="Crabtree J."/>
            <person name="Angiuoli S.V."/>
            <person name="Eisen J.A."/>
            <person name="Seshadri R."/>
            <person name="Ren Q."/>
            <person name="Wu M."/>
            <person name="Utterback T.R."/>
            <person name="Smith S."/>
            <person name="Lewis M."/>
            <person name="Khouri H."/>
            <person name="Zhang C."/>
            <person name="Niu H."/>
            <person name="Lin Q."/>
            <person name="Ohashi N."/>
            <person name="Zhi N."/>
            <person name="Nelson W.C."/>
            <person name="Brinkac L.M."/>
            <person name="Dodson R.J."/>
            <person name="Rosovitz M.J."/>
            <person name="Sundaram J.P."/>
            <person name="Daugherty S.C."/>
            <person name="Davidsen T."/>
            <person name="Durkin A.S."/>
            <person name="Gwinn M.L."/>
            <person name="Haft D.H."/>
            <person name="Selengut J.D."/>
            <person name="Sullivan S.A."/>
            <person name="Zafar N."/>
            <person name="Zhou L."/>
            <person name="Benahmed F."/>
            <person name="Forberger H."/>
            <person name="Halpin R."/>
            <person name="Mulligan S."/>
            <person name="Robinson J."/>
            <person name="White O."/>
            <person name="Rikihisa Y."/>
            <person name="Tettelin H."/>
        </authorList>
    </citation>
    <scope>NUCLEOTIDE SEQUENCE [LARGE SCALE GENOMIC DNA]</scope>
    <source>
        <strain>ATCC VR-367 / Miyayama</strain>
    </source>
</reference>
<protein>
    <recommendedName>
        <fullName evidence="1">Malate dehydrogenase</fullName>
        <ecNumber evidence="1">1.1.1.37</ecNumber>
    </recommendedName>
</protein>
<organism>
    <name type="scientific">Neorickettsia sennetsu (strain ATCC VR-367 / Miyayama)</name>
    <name type="common">Ehrlichia sennetsu</name>
    <dbReference type="NCBI Taxonomy" id="222891"/>
    <lineage>
        <taxon>Bacteria</taxon>
        <taxon>Pseudomonadati</taxon>
        <taxon>Pseudomonadota</taxon>
        <taxon>Alphaproteobacteria</taxon>
        <taxon>Rickettsiales</taxon>
        <taxon>Anaplasmataceae</taxon>
        <taxon>Neorickettsia</taxon>
    </lineage>
</organism>
<feature type="chain" id="PRO_0000241953" description="Malate dehydrogenase">
    <location>
        <begin position="1"/>
        <end position="315"/>
    </location>
</feature>
<feature type="active site" description="Proton acceptor" evidence="1">
    <location>
        <position position="174"/>
    </location>
</feature>
<feature type="binding site" evidence="1">
    <location>
        <begin position="7"/>
        <end position="12"/>
    </location>
    <ligand>
        <name>NAD(+)</name>
        <dbReference type="ChEBI" id="CHEBI:57540"/>
    </ligand>
</feature>
<feature type="binding site" evidence="1">
    <location>
        <position position="32"/>
    </location>
    <ligand>
        <name>NAD(+)</name>
        <dbReference type="ChEBI" id="CHEBI:57540"/>
    </ligand>
</feature>
<feature type="binding site" evidence="1">
    <location>
        <position position="81"/>
    </location>
    <ligand>
        <name>substrate</name>
    </ligand>
</feature>
<feature type="binding site" evidence="1">
    <location>
        <position position="87"/>
    </location>
    <ligand>
        <name>substrate</name>
    </ligand>
</feature>
<feature type="binding site" evidence="1">
    <location>
        <position position="94"/>
    </location>
    <ligand>
        <name>NAD(+)</name>
        <dbReference type="ChEBI" id="CHEBI:57540"/>
    </ligand>
</feature>
<feature type="binding site" evidence="1">
    <location>
        <begin position="117"/>
        <end position="119"/>
    </location>
    <ligand>
        <name>NAD(+)</name>
        <dbReference type="ChEBI" id="CHEBI:57540"/>
    </ligand>
</feature>
<feature type="binding site" evidence="1">
    <location>
        <position position="119"/>
    </location>
    <ligand>
        <name>substrate</name>
    </ligand>
</feature>
<feature type="binding site" evidence="1">
    <location>
        <position position="150"/>
    </location>
    <ligand>
        <name>substrate</name>
    </ligand>
</feature>
<gene>
    <name evidence="1" type="primary">mdh</name>
    <name type="ordered locus">NSE_0956</name>
</gene>
<evidence type="ECO:0000255" key="1">
    <source>
        <dbReference type="HAMAP-Rule" id="MF_00487"/>
    </source>
</evidence>
<keyword id="KW-0520">NAD</keyword>
<keyword id="KW-0560">Oxidoreductase</keyword>
<keyword id="KW-0816">Tricarboxylic acid cycle</keyword>
<dbReference type="EC" id="1.1.1.37" evidence="1"/>
<dbReference type="EMBL" id="CP000237">
    <property type="protein sequence ID" value="ABD46433.1"/>
    <property type="molecule type" value="Genomic_DNA"/>
</dbReference>
<dbReference type="RefSeq" id="WP_011452326.1">
    <property type="nucleotide sequence ID" value="NC_007798.1"/>
</dbReference>
<dbReference type="SMR" id="Q2GCH6"/>
<dbReference type="STRING" id="222891.NSE_0956"/>
<dbReference type="KEGG" id="nse:NSE_0956"/>
<dbReference type="eggNOG" id="COG0039">
    <property type="taxonomic scope" value="Bacteria"/>
</dbReference>
<dbReference type="HOGENOM" id="CLU_045401_2_1_5"/>
<dbReference type="OrthoDB" id="9802969at2"/>
<dbReference type="Proteomes" id="UP000001942">
    <property type="component" value="Chromosome"/>
</dbReference>
<dbReference type="GO" id="GO:0004459">
    <property type="term" value="F:L-lactate dehydrogenase activity"/>
    <property type="evidence" value="ECO:0007669"/>
    <property type="project" value="TreeGrafter"/>
</dbReference>
<dbReference type="GO" id="GO:0030060">
    <property type="term" value="F:L-malate dehydrogenase (NAD+) activity"/>
    <property type="evidence" value="ECO:0007669"/>
    <property type="project" value="UniProtKB-UniRule"/>
</dbReference>
<dbReference type="GO" id="GO:0006089">
    <property type="term" value="P:lactate metabolic process"/>
    <property type="evidence" value="ECO:0007669"/>
    <property type="project" value="TreeGrafter"/>
</dbReference>
<dbReference type="GO" id="GO:0006099">
    <property type="term" value="P:tricarboxylic acid cycle"/>
    <property type="evidence" value="ECO:0007669"/>
    <property type="project" value="UniProtKB-UniRule"/>
</dbReference>
<dbReference type="CDD" id="cd01339">
    <property type="entry name" value="LDH-like_MDH"/>
    <property type="match status" value="1"/>
</dbReference>
<dbReference type="FunFam" id="3.40.50.720:FF:000018">
    <property type="entry name" value="Malate dehydrogenase"/>
    <property type="match status" value="1"/>
</dbReference>
<dbReference type="FunFam" id="3.90.110.10:FF:000004">
    <property type="entry name" value="Malate dehydrogenase"/>
    <property type="match status" value="1"/>
</dbReference>
<dbReference type="Gene3D" id="3.90.110.10">
    <property type="entry name" value="Lactate dehydrogenase/glycoside hydrolase, family 4, C-terminal"/>
    <property type="match status" value="1"/>
</dbReference>
<dbReference type="Gene3D" id="3.40.50.720">
    <property type="entry name" value="NAD(P)-binding Rossmann-like Domain"/>
    <property type="match status" value="1"/>
</dbReference>
<dbReference type="HAMAP" id="MF_00487">
    <property type="entry name" value="Malate_dehydrog_3"/>
    <property type="match status" value="1"/>
</dbReference>
<dbReference type="InterPro" id="IPR001557">
    <property type="entry name" value="L-lactate/malate_DH"/>
</dbReference>
<dbReference type="InterPro" id="IPR022383">
    <property type="entry name" value="Lactate/malate_DH_C"/>
</dbReference>
<dbReference type="InterPro" id="IPR001236">
    <property type="entry name" value="Lactate/malate_DH_N"/>
</dbReference>
<dbReference type="InterPro" id="IPR015955">
    <property type="entry name" value="Lactate_DH/Glyco_Ohase_4_C"/>
</dbReference>
<dbReference type="InterPro" id="IPR011275">
    <property type="entry name" value="Malate_DH_type3"/>
</dbReference>
<dbReference type="InterPro" id="IPR036291">
    <property type="entry name" value="NAD(P)-bd_dom_sf"/>
</dbReference>
<dbReference type="NCBIfam" id="NF004863">
    <property type="entry name" value="PRK06223.1"/>
    <property type="match status" value="1"/>
</dbReference>
<dbReference type="PANTHER" id="PTHR43128">
    <property type="entry name" value="L-2-HYDROXYCARBOXYLATE DEHYDROGENASE (NAD(P)(+))"/>
    <property type="match status" value="1"/>
</dbReference>
<dbReference type="PANTHER" id="PTHR43128:SF16">
    <property type="entry name" value="L-LACTATE DEHYDROGENASE"/>
    <property type="match status" value="1"/>
</dbReference>
<dbReference type="Pfam" id="PF02866">
    <property type="entry name" value="Ldh_1_C"/>
    <property type="match status" value="1"/>
</dbReference>
<dbReference type="Pfam" id="PF00056">
    <property type="entry name" value="Ldh_1_N"/>
    <property type="match status" value="1"/>
</dbReference>
<dbReference type="PIRSF" id="PIRSF000102">
    <property type="entry name" value="Lac_mal_DH"/>
    <property type="match status" value="1"/>
</dbReference>
<dbReference type="PRINTS" id="PR00086">
    <property type="entry name" value="LLDHDRGNASE"/>
</dbReference>
<dbReference type="SUPFAM" id="SSF56327">
    <property type="entry name" value="LDH C-terminal domain-like"/>
    <property type="match status" value="1"/>
</dbReference>
<dbReference type="SUPFAM" id="SSF51735">
    <property type="entry name" value="NAD(P)-binding Rossmann-fold domains"/>
    <property type="match status" value="1"/>
</dbReference>
<accession>Q2GCH6</accession>
<sequence length="315" mass="33852">MKVSLIGAGNIGGTLAYLIASKKLASEVELIDVNGDLARGKALDVSQTLPLIGYTMKINGSANMERIKGSSVIIITAGIPRKPGMTREELIDVNAVVMKEVGEKIKKFAPKAFVIVVTNPLDVMVWVLYKAAEISPDKIVGMAGVLDASRMNLFLAQELGVSVADVKSLVLGSHGDSMVPLFRHSTVSGMSLPELVSVGLITKDKVDSIIERTRSGGAEIVALLKTGSAYYTPAASVLEMAEAYLLDQKKTLVCSVMMRGRYGVEDDIFSGIPVIMGSGGVERVIELDLTPDERRMFENSVAATRKLVLEARKYF</sequence>
<proteinExistence type="inferred from homology"/>